<sequence>MSTEAALLKLQSWFSPSFPVGGYTYSHGLEYGVECGLIHHRESLQTWLEGLLQWGAGHGEGVLFHGAYGAAVRQDWAALHEVTVWAQALRPTAELALESRGQGRAFLVAVQQGWPHPWVQRWGDGLAEHAPYGVVTGLACAAHGVPEAMGLSALLHGMVAGWISAAVRLIPLGQQAGVLVQSALEGEIQTLVRALLSQPASAFQAELGGCAWMAEWCSLKHETQYTRLFRS</sequence>
<gene>
    <name evidence="1" type="primary">ureF</name>
    <name type="ordered locus">Mmc1_1029</name>
</gene>
<protein>
    <recommendedName>
        <fullName evidence="1">Urease accessory protein UreF</fullName>
    </recommendedName>
</protein>
<feature type="chain" id="PRO_0000344129" description="Urease accessory protein UreF">
    <location>
        <begin position="1"/>
        <end position="231"/>
    </location>
</feature>
<keyword id="KW-0143">Chaperone</keyword>
<keyword id="KW-0963">Cytoplasm</keyword>
<keyword id="KW-0996">Nickel insertion</keyword>
<keyword id="KW-1185">Reference proteome</keyword>
<comment type="function">
    <text evidence="1">Required for maturation of urease via the functional incorporation of the urease nickel metallocenter.</text>
</comment>
<comment type="subunit">
    <text evidence="1">UreD, UreF and UreG form a complex that acts as a GTP-hydrolysis-dependent molecular chaperone, activating the urease apoprotein by helping to assemble the nickel containing metallocenter of UreC. The UreE protein probably delivers the nickel.</text>
</comment>
<comment type="subcellular location">
    <subcellularLocation>
        <location evidence="1">Cytoplasm</location>
    </subcellularLocation>
</comment>
<comment type="similarity">
    <text evidence="1">Belongs to the UreF family.</text>
</comment>
<evidence type="ECO:0000255" key="1">
    <source>
        <dbReference type="HAMAP-Rule" id="MF_01385"/>
    </source>
</evidence>
<name>UREF_MAGMM</name>
<organism>
    <name type="scientific">Magnetococcus marinus (strain ATCC BAA-1437 / JCM 17883 / MC-1)</name>
    <dbReference type="NCBI Taxonomy" id="156889"/>
    <lineage>
        <taxon>Bacteria</taxon>
        <taxon>Pseudomonadati</taxon>
        <taxon>Pseudomonadota</taxon>
        <taxon>Alphaproteobacteria</taxon>
        <taxon>Magnetococcales</taxon>
        <taxon>Magnetococcaceae</taxon>
        <taxon>Magnetococcus</taxon>
    </lineage>
</organism>
<dbReference type="EMBL" id="CP000471">
    <property type="protein sequence ID" value="ABK43547.1"/>
    <property type="molecule type" value="Genomic_DNA"/>
</dbReference>
<dbReference type="RefSeq" id="WP_011712704.1">
    <property type="nucleotide sequence ID" value="NC_008576.1"/>
</dbReference>
<dbReference type="SMR" id="A0L6F4"/>
<dbReference type="STRING" id="156889.Mmc1_1029"/>
<dbReference type="KEGG" id="mgm:Mmc1_1029"/>
<dbReference type="eggNOG" id="COG0830">
    <property type="taxonomic scope" value="Bacteria"/>
</dbReference>
<dbReference type="HOGENOM" id="CLU_049215_2_1_5"/>
<dbReference type="OrthoDB" id="9798772at2"/>
<dbReference type="Proteomes" id="UP000002586">
    <property type="component" value="Chromosome"/>
</dbReference>
<dbReference type="GO" id="GO:0005737">
    <property type="term" value="C:cytoplasm"/>
    <property type="evidence" value="ECO:0007669"/>
    <property type="project" value="UniProtKB-SubCell"/>
</dbReference>
<dbReference type="GO" id="GO:0016151">
    <property type="term" value="F:nickel cation binding"/>
    <property type="evidence" value="ECO:0007669"/>
    <property type="project" value="UniProtKB-UniRule"/>
</dbReference>
<dbReference type="Gene3D" id="1.10.4190.10">
    <property type="entry name" value="Urease accessory protein UreF"/>
    <property type="match status" value="1"/>
</dbReference>
<dbReference type="HAMAP" id="MF_01385">
    <property type="entry name" value="UreF"/>
    <property type="match status" value="1"/>
</dbReference>
<dbReference type="InterPro" id="IPR002639">
    <property type="entry name" value="UreF"/>
</dbReference>
<dbReference type="InterPro" id="IPR038277">
    <property type="entry name" value="UreF_sf"/>
</dbReference>
<dbReference type="PANTHER" id="PTHR33620">
    <property type="entry name" value="UREASE ACCESSORY PROTEIN F"/>
    <property type="match status" value="1"/>
</dbReference>
<dbReference type="PANTHER" id="PTHR33620:SF1">
    <property type="entry name" value="UREASE ACCESSORY PROTEIN F"/>
    <property type="match status" value="1"/>
</dbReference>
<dbReference type="Pfam" id="PF01730">
    <property type="entry name" value="UreF"/>
    <property type="match status" value="1"/>
</dbReference>
<dbReference type="PIRSF" id="PIRSF009467">
    <property type="entry name" value="Ureas_acces_UreF"/>
    <property type="match status" value="1"/>
</dbReference>
<reference key="1">
    <citation type="journal article" date="2009" name="Appl. Environ. Microbiol.">
        <title>Complete genome sequence of the chemolithoautotrophic marine magnetotactic coccus strain MC-1.</title>
        <authorList>
            <person name="Schubbe S."/>
            <person name="Williams T.J."/>
            <person name="Xie G."/>
            <person name="Kiss H.E."/>
            <person name="Brettin T.S."/>
            <person name="Martinez D."/>
            <person name="Ross C.A."/>
            <person name="Schuler D."/>
            <person name="Cox B.L."/>
            <person name="Nealson K.H."/>
            <person name="Bazylinski D.A."/>
        </authorList>
    </citation>
    <scope>NUCLEOTIDE SEQUENCE [LARGE SCALE GENOMIC DNA]</scope>
    <source>
        <strain>ATCC BAA-1437 / JCM 17883 / MC-1</strain>
    </source>
</reference>
<accession>A0L6F4</accession>
<proteinExistence type="inferred from homology"/>